<accession>A6VJX1</accession>
<name>Y1691_METM7</name>
<protein>
    <recommendedName>
        <fullName evidence="1">UPF0305 protein MmarC7_1691</fullName>
    </recommendedName>
</protein>
<gene>
    <name type="ordered locus">MmarC7_1691</name>
</gene>
<organism>
    <name type="scientific">Methanococcus maripaludis (strain C7 / ATCC BAA-1331)</name>
    <dbReference type="NCBI Taxonomy" id="426368"/>
    <lineage>
        <taxon>Archaea</taxon>
        <taxon>Methanobacteriati</taxon>
        <taxon>Methanobacteriota</taxon>
        <taxon>Methanomada group</taxon>
        <taxon>Methanococci</taxon>
        <taxon>Methanococcales</taxon>
        <taxon>Methanococcaceae</taxon>
        <taxon>Methanococcus</taxon>
    </lineage>
</organism>
<evidence type="ECO:0000255" key="1">
    <source>
        <dbReference type="HAMAP-Rule" id="MF_00763"/>
    </source>
</evidence>
<proteinExistence type="inferred from homology"/>
<dbReference type="EMBL" id="CP000745">
    <property type="protein sequence ID" value="ABR66747.1"/>
    <property type="molecule type" value="Genomic_DNA"/>
</dbReference>
<dbReference type="SMR" id="A6VJX1"/>
<dbReference type="STRING" id="426368.MmarC7_1691"/>
<dbReference type="KEGG" id="mmz:MmarC7_1691"/>
<dbReference type="eggNOG" id="arCOG03215">
    <property type="taxonomic scope" value="Archaea"/>
</dbReference>
<dbReference type="HOGENOM" id="CLU_089549_1_0_2"/>
<dbReference type="OrthoDB" id="81482at2157"/>
<dbReference type="HAMAP" id="MF_00763">
    <property type="entry name" value="UPF0305"/>
    <property type="match status" value="1"/>
</dbReference>
<dbReference type="InterPro" id="IPR019215">
    <property type="entry name" value="DUF2115"/>
</dbReference>
<dbReference type="NCBIfam" id="NF002174">
    <property type="entry name" value="PRK01022.1-1"/>
    <property type="match status" value="1"/>
</dbReference>
<dbReference type="Pfam" id="PF09888">
    <property type="entry name" value="DUF2115"/>
    <property type="match status" value="1"/>
</dbReference>
<dbReference type="PIRSF" id="PIRSF004959">
    <property type="entry name" value="UCP004959"/>
    <property type="match status" value="1"/>
</dbReference>
<sequence>MNSRKLFSKLKEESYDVSIFDLMNAKVYLEKDMTYLPEDYKKGYLEDFFTFFPEVLREIKNKTEEEIEDFEIDEEEIKKVDLRLCSMGSKKMGRNSYEKLVKTVINYLIFINKRPLHALTTRFPGGKQIIEKNGNYYCPIKNAQSNELSICEFCICKDLNEL</sequence>
<comment type="similarity">
    <text evidence="1">Belongs to the UPF0305 family.</text>
</comment>
<feature type="chain" id="PRO_1000046774" description="UPF0305 protein MmarC7_1691">
    <location>
        <begin position="1"/>
        <end position="162"/>
    </location>
</feature>
<reference key="1">
    <citation type="submission" date="2007-06" db="EMBL/GenBank/DDBJ databases">
        <title>Complete sequence of Methanococcus maripaludis C7.</title>
        <authorList>
            <consortium name="US DOE Joint Genome Institute"/>
            <person name="Copeland A."/>
            <person name="Lucas S."/>
            <person name="Lapidus A."/>
            <person name="Barry K."/>
            <person name="Glavina del Rio T."/>
            <person name="Dalin E."/>
            <person name="Tice H."/>
            <person name="Pitluck S."/>
            <person name="Clum A."/>
            <person name="Schmutz J."/>
            <person name="Larimer F."/>
            <person name="Land M."/>
            <person name="Hauser L."/>
            <person name="Kyrpides N."/>
            <person name="Anderson I."/>
            <person name="Sieprawska-Lupa M."/>
            <person name="Whitman W.B."/>
            <person name="Richardson P."/>
        </authorList>
    </citation>
    <scope>NUCLEOTIDE SEQUENCE [LARGE SCALE GENOMIC DNA]</scope>
    <source>
        <strain>C7 / ATCC BAA-1331</strain>
    </source>
</reference>